<accession>Q8XKK1</accession>
<feature type="chain" id="PRO_0000179539" description="ATP-dependent Clp protease proteolytic subunit">
    <location>
        <begin position="1"/>
        <end position="194"/>
    </location>
</feature>
<feature type="active site" description="Nucleophile" evidence="1">
    <location>
        <position position="99"/>
    </location>
</feature>
<feature type="active site" evidence="1">
    <location>
        <position position="124"/>
    </location>
</feature>
<sequence length="194" mass="21540">MSNLVPMVVEQTSKGERSYDIFSRLLKDRIIMLSGEVNDVTANLVVAQLLFLESEDPDKDIHLYINSPGGSITSGMAIYDTMQYIKPDVSTICIGMAASMGAFLLSSGAKGKRFALPNAEIMIHQPLGGFQGQATDIDIHAKRILKIKDKLNQILSENTNQPLEKIKVDVERDYFMEASEAVEYGLIDKVIERK</sequence>
<gene>
    <name evidence="1" type="primary">clpP</name>
    <name type="ordered locus">CPE1393</name>
</gene>
<protein>
    <recommendedName>
        <fullName evidence="1">ATP-dependent Clp protease proteolytic subunit</fullName>
        <ecNumber evidence="1">3.4.21.92</ecNumber>
    </recommendedName>
    <alternativeName>
        <fullName evidence="1">Endopeptidase Clp</fullName>
    </alternativeName>
</protein>
<organism>
    <name type="scientific">Clostridium perfringens (strain 13 / Type A)</name>
    <dbReference type="NCBI Taxonomy" id="195102"/>
    <lineage>
        <taxon>Bacteria</taxon>
        <taxon>Bacillati</taxon>
        <taxon>Bacillota</taxon>
        <taxon>Clostridia</taxon>
        <taxon>Eubacteriales</taxon>
        <taxon>Clostridiaceae</taxon>
        <taxon>Clostridium</taxon>
    </lineage>
</organism>
<reference key="1">
    <citation type="journal article" date="2002" name="Proc. Natl. Acad. Sci. U.S.A.">
        <title>Complete genome sequence of Clostridium perfringens, an anaerobic flesh-eater.</title>
        <authorList>
            <person name="Shimizu T."/>
            <person name="Ohtani K."/>
            <person name="Hirakawa H."/>
            <person name="Ohshima K."/>
            <person name="Yamashita A."/>
            <person name="Shiba T."/>
            <person name="Ogasawara N."/>
            <person name="Hattori M."/>
            <person name="Kuhara S."/>
            <person name="Hayashi H."/>
        </authorList>
    </citation>
    <scope>NUCLEOTIDE SEQUENCE [LARGE SCALE GENOMIC DNA]</scope>
    <source>
        <strain>13 / Type A</strain>
    </source>
</reference>
<name>CLPP_CLOPE</name>
<keyword id="KW-0963">Cytoplasm</keyword>
<keyword id="KW-0378">Hydrolase</keyword>
<keyword id="KW-0645">Protease</keyword>
<keyword id="KW-1185">Reference proteome</keyword>
<keyword id="KW-0720">Serine protease</keyword>
<evidence type="ECO:0000255" key="1">
    <source>
        <dbReference type="HAMAP-Rule" id="MF_00444"/>
    </source>
</evidence>
<comment type="function">
    <text evidence="1">Cleaves peptides in various proteins in a process that requires ATP hydrolysis. Has a chymotrypsin-like activity. Plays a major role in the degradation of misfolded proteins.</text>
</comment>
<comment type="catalytic activity">
    <reaction evidence="1">
        <text>Hydrolysis of proteins to small peptides in the presence of ATP and magnesium. alpha-casein is the usual test substrate. In the absence of ATP, only oligopeptides shorter than five residues are hydrolyzed (such as succinyl-Leu-Tyr-|-NHMec, and Leu-Tyr-Leu-|-Tyr-Trp, in which cleavage of the -Tyr-|-Leu- and -Tyr-|-Trp bonds also occurs).</text>
        <dbReference type="EC" id="3.4.21.92"/>
    </reaction>
</comment>
<comment type="subunit">
    <text evidence="1">Fourteen ClpP subunits assemble into 2 heptameric rings which stack back to back to give a disk-like structure with a central cavity, resembling the structure of eukaryotic proteasomes.</text>
</comment>
<comment type="subcellular location">
    <subcellularLocation>
        <location evidence="1">Cytoplasm</location>
    </subcellularLocation>
</comment>
<comment type="similarity">
    <text evidence="1">Belongs to the peptidase S14 family.</text>
</comment>
<proteinExistence type="inferred from homology"/>
<dbReference type="EC" id="3.4.21.92" evidence="1"/>
<dbReference type="EMBL" id="BA000016">
    <property type="protein sequence ID" value="BAB81099.1"/>
    <property type="molecule type" value="Genomic_DNA"/>
</dbReference>
<dbReference type="RefSeq" id="WP_003448628.1">
    <property type="nucleotide sequence ID" value="NC_003366.1"/>
</dbReference>
<dbReference type="SMR" id="Q8XKK1"/>
<dbReference type="STRING" id="195102.gene:10490657"/>
<dbReference type="MEROPS" id="S14.001"/>
<dbReference type="GeneID" id="93002065"/>
<dbReference type="KEGG" id="cpe:CPE1393"/>
<dbReference type="HOGENOM" id="CLU_058707_3_2_9"/>
<dbReference type="Proteomes" id="UP000000818">
    <property type="component" value="Chromosome"/>
</dbReference>
<dbReference type="GO" id="GO:0005737">
    <property type="term" value="C:cytoplasm"/>
    <property type="evidence" value="ECO:0007669"/>
    <property type="project" value="UniProtKB-SubCell"/>
</dbReference>
<dbReference type="GO" id="GO:0009368">
    <property type="term" value="C:endopeptidase Clp complex"/>
    <property type="evidence" value="ECO:0007669"/>
    <property type="project" value="TreeGrafter"/>
</dbReference>
<dbReference type="GO" id="GO:0004176">
    <property type="term" value="F:ATP-dependent peptidase activity"/>
    <property type="evidence" value="ECO:0007669"/>
    <property type="project" value="InterPro"/>
</dbReference>
<dbReference type="GO" id="GO:0051117">
    <property type="term" value="F:ATPase binding"/>
    <property type="evidence" value="ECO:0007669"/>
    <property type="project" value="TreeGrafter"/>
</dbReference>
<dbReference type="GO" id="GO:0004252">
    <property type="term" value="F:serine-type endopeptidase activity"/>
    <property type="evidence" value="ECO:0007669"/>
    <property type="project" value="UniProtKB-UniRule"/>
</dbReference>
<dbReference type="GO" id="GO:0006515">
    <property type="term" value="P:protein quality control for misfolded or incompletely synthesized proteins"/>
    <property type="evidence" value="ECO:0007669"/>
    <property type="project" value="TreeGrafter"/>
</dbReference>
<dbReference type="CDD" id="cd07017">
    <property type="entry name" value="S14_ClpP_2"/>
    <property type="match status" value="1"/>
</dbReference>
<dbReference type="FunFam" id="3.90.226.10:FF:000001">
    <property type="entry name" value="ATP-dependent Clp protease proteolytic subunit"/>
    <property type="match status" value="1"/>
</dbReference>
<dbReference type="Gene3D" id="3.90.226.10">
    <property type="entry name" value="2-enoyl-CoA Hydratase, Chain A, domain 1"/>
    <property type="match status" value="1"/>
</dbReference>
<dbReference type="HAMAP" id="MF_00444">
    <property type="entry name" value="ClpP"/>
    <property type="match status" value="1"/>
</dbReference>
<dbReference type="InterPro" id="IPR001907">
    <property type="entry name" value="ClpP"/>
</dbReference>
<dbReference type="InterPro" id="IPR029045">
    <property type="entry name" value="ClpP/crotonase-like_dom_sf"/>
</dbReference>
<dbReference type="InterPro" id="IPR023562">
    <property type="entry name" value="ClpP/TepA"/>
</dbReference>
<dbReference type="InterPro" id="IPR033135">
    <property type="entry name" value="ClpP_His_AS"/>
</dbReference>
<dbReference type="InterPro" id="IPR018215">
    <property type="entry name" value="ClpP_Ser_AS"/>
</dbReference>
<dbReference type="NCBIfam" id="TIGR00493">
    <property type="entry name" value="clpP"/>
    <property type="match status" value="1"/>
</dbReference>
<dbReference type="NCBIfam" id="NF001368">
    <property type="entry name" value="PRK00277.1"/>
    <property type="match status" value="1"/>
</dbReference>
<dbReference type="NCBIfam" id="NF009205">
    <property type="entry name" value="PRK12553.1"/>
    <property type="match status" value="1"/>
</dbReference>
<dbReference type="PANTHER" id="PTHR10381">
    <property type="entry name" value="ATP-DEPENDENT CLP PROTEASE PROTEOLYTIC SUBUNIT"/>
    <property type="match status" value="1"/>
</dbReference>
<dbReference type="PANTHER" id="PTHR10381:SF70">
    <property type="entry name" value="ATP-DEPENDENT CLP PROTEASE PROTEOLYTIC SUBUNIT"/>
    <property type="match status" value="1"/>
</dbReference>
<dbReference type="Pfam" id="PF00574">
    <property type="entry name" value="CLP_protease"/>
    <property type="match status" value="1"/>
</dbReference>
<dbReference type="PRINTS" id="PR00127">
    <property type="entry name" value="CLPPROTEASEP"/>
</dbReference>
<dbReference type="SUPFAM" id="SSF52096">
    <property type="entry name" value="ClpP/crotonase"/>
    <property type="match status" value="1"/>
</dbReference>
<dbReference type="PROSITE" id="PS00382">
    <property type="entry name" value="CLP_PROTEASE_HIS"/>
    <property type="match status" value="1"/>
</dbReference>
<dbReference type="PROSITE" id="PS00381">
    <property type="entry name" value="CLP_PROTEASE_SER"/>
    <property type="match status" value="1"/>
</dbReference>